<gene>
    <name evidence="1" type="primary">rnz</name>
    <name type="ordered locus">BCE33L3895</name>
</gene>
<name>RNZ_BACCZ</name>
<sequence length="307" mass="34213">MEFVFLGTGAGVPSKGRNVSAIALQLLEERGQTWLFDCGEATQHQILHTSVRPRRIEKIFITHLHGDHIFGLPGLLGSRSFQGGTTPLTVYGPKGIKQFIEVALSVSTTHVKYPLEIVEITEEGTVFEDNEFHVETKRLSHGIECFGYRIIEKDIQGALLVDKLLEMGVKPGPLFKRLKDGEVVELENGTILNGKDFIGPPQKGRVITILGDTRYCEASRELAQDADVLVHEATFAAEDEQQAYDYFHSTSKQAASIALQANAKRLILTHISSRYQGDTYKELLKEARELFSNTEIATDLKSFPVDR</sequence>
<dbReference type="EC" id="3.1.26.11" evidence="1"/>
<dbReference type="EMBL" id="CP000001">
    <property type="protein sequence ID" value="AAU16373.1"/>
    <property type="molecule type" value="Genomic_DNA"/>
</dbReference>
<dbReference type="RefSeq" id="WP_000397445.1">
    <property type="nucleotide sequence ID" value="NC_006274.1"/>
</dbReference>
<dbReference type="SMR" id="Q635E2"/>
<dbReference type="KEGG" id="bcz:BCE33L3895"/>
<dbReference type="PATRIC" id="fig|288681.22.peg.1504"/>
<dbReference type="Proteomes" id="UP000002612">
    <property type="component" value="Chromosome"/>
</dbReference>
<dbReference type="GO" id="GO:0042781">
    <property type="term" value="F:3'-tRNA processing endoribonuclease activity"/>
    <property type="evidence" value="ECO:0007669"/>
    <property type="project" value="UniProtKB-UniRule"/>
</dbReference>
<dbReference type="GO" id="GO:0008270">
    <property type="term" value="F:zinc ion binding"/>
    <property type="evidence" value="ECO:0007669"/>
    <property type="project" value="UniProtKB-UniRule"/>
</dbReference>
<dbReference type="CDD" id="cd07717">
    <property type="entry name" value="RNaseZ_ZiPD-like_MBL-fold"/>
    <property type="match status" value="1"/>
</dbReference>
<dbReference type="FunFam" id="3.60.15.10:FF:000002">
    <property type="entry name" value="Ribonuclease Z"/>
    <property type="match status" value="1"/>
</dbReference>
<dbReference type="Gene3D" id="3.60.15.10">
    <property type="entry name" value="Ribonuclease Z/Hydroxyacylglutathione hydrolase-like"/>
    <property type="match status" value="1"/>
</dbReference>
<dbReference type="HAMAP" id="MF_01818">
    <property type="entry name" value="RNase_Z_BN"/>
    <property type="match status" value="1"/>
</dbReference>
<dbReference type="InterPro" id="IPR001279">
    <property type="entry name" value="Metallo-B-lactamas"/>
</dbReference>
<dbReference type="InterPro" id="IPR036866">
    <property type="entry name" value="RibonucZ/Hydroxyglut_hydro"/>
</dbReference>
<dbReference type="InterPro" id="IPR013471">
    <property type="entry name" value="RNase_Z/BN"/>
</dbReference>
<dbReference type="NCBIfam" id="NF000800">
    <property type="entry name" value="PRK00055.1-1"/>
    <property type="match status" value="1"/>
</dbReference>
<dbReference type="NCBIfam" id="NF000801">
    <property type="entry name" value="PRK00055.1-3"/>
    <property type="match status" value="1"/>
</dbReference>
<dbReference type="NCBIfam" id="TIGR02651">
    <property type="entry name" value="RNase_Z"/>
    <property type="match status" value="1"/>
</dbReference>
<dbReference type="PANTHER" id="PTHR46018">
    <property type="entry name" value="ZINC PHOSPHODIESTERASE ELAC PROTEIN 1"/>
    <property type="match status" value="1"/>
</dbReference>
<dbReference type="PANTHER" id="PTHR46018:SF2">
    <property type="entry name" value="ZINC PHOSPHODIESTERASE ELAC PROTEIN 1"/>
    <property type="match status" value="1"/>
</dbReference>
<dbReference type="Pfam" id="PF00753">
    <property type="entry name" value="Lactamase_B"/>
    <property type="match status" value="1"/>
</dbReference>
<dbReference type="Pfam" id="PF12706">
    <property type="entry name" value="Lactamase_B_2"/>
    <property type="match status" value="1"/>
</dbReference>
<dbReference type="SMART" id="SM00849">
    <property type="entry name" value="Lactamase_B"/>
    <property type="match status" value="1"/>
</dbReference>
<dbReference type="SUPFAM" id="SSF56281">
    <property type="entry name" value="Metallo-hydrolase/oxidoreductase"/>
    <property type="match status" value="1"/>
</dbReference>
<proteinExistence type="inferred from homology"/>
<organism>
    <name type="scientific">Bacillus cereus (strain ZK / E33L)</name>
    <dbReference type="NCBI Taxonomy" id="288681"/>
    <lineage>
        <taxon>Bacteria</taxon>
        <taxon>Bacillati</taxon>
        <taxon>Bacillota</taxon>
        <taxon>Bacilli</taxon>
        <taxon>Bacillales</taxon>
        <taxon>Bacillaceae</taxon>
        <taxon>Bacillus</taxon>
        <taxon>Bacillus cereus group</taxon>
    </lineage>
</organism>
<protein>
    <recommendedName>
        <fullName evidence="1">Ribonuclease Z</fullName>
        <shortName evidence="1">RNase Z</shortName>
        <ecNumber evidence="1">3.1.26.11</ecNumber>
    </recommendedName>
    <alternativeName>
        <fullName evidence="1">tRNA 3 endonuclease</fullName>
    </alternativeName>
    <alternativeName>
        <fullName evidence="1">tRNase Z</fullName>
    </alternativeName>
</protein>
<accession>Q635E2</accession>
<comment type="function">
    <text evidence="1">Zinc phosphodiesterase, which displays some tRNA 3'-processing endonuclease activity. Probably involved in tRNA maturation, by removing a 3'-trailer from precursor tRNA.</text>
</comment>
<comment type="catalytic activity">
    <reaction evidence="1">
        <text>Endonucleolytic cleavage of RNA, removing extra 3' nucleotides from tRNA precursor, generating 3' termini of tRNAs. A 3'-hydroxy group is left at the tRNA terminus and a 5'-phosphoryl group is left at the trailer molecule.</text>
        <dbReference type="EC" id="3.1.26.11"/>
    </reaction>
</comment>
<comment type="cofactor">
    <cofactor evidence="1">
        <name>Zn(2+)</name>
        <dbReference type="ChEBI" id="CHEBI:29105"/>
    </cofactor>
    <text evidence="1">Binds 2 Zn(2+) ions.</text>
</comment>
<comment type="subunit">
    <text evidence="1">Homodimer.</text>
</comment>
<comment type="similarity">
    <text evidence="1">Belongs to the RNase Z family.</text>
</comment>
<feature type="chain" id="PRO_0000155842" description="Ribonuclease Z">
    <location>
        <begin position="1"/>
        <end position="307"/>
    </location>
</feature>
<feature type="active site" description="Proton acceptor" evidence="1">
    <location>
        <position position="67"/>
    </location>
</feature>
<feature type="binding site" evidence="1">
    <location>
        <position position="63"/>
    </location>
    <ligand>
        <name>Zn(2+)</name>
        <dbReference type="ChEBI" id="CHEBI:29105"/>
        <label>1</label>
        <note>catalytic</note>
    </ligand>
</feature>
<feature type="binding site" evidence="1">
    <location>
        <position position="65"/>
    </location>
    <ligand>
        <name>Zn(2+)</name>
        <dbReference type="ChEBI" id="CHEBI:29105"/>
        <label>1</label>
        <note>catalytic</note>
    </ligand>
</feature>
<feature type="binding site" evidence="1">
    <location>
        <position position="67"/>
    </location>
    <ligand>
        <name>Zn(2+)</name>
        <dbReference type="ChEBI" id="CHEBI:29105"/>
        <label>2</label>
        <note>catalytic</note>
    </ligand>
</feature>
<feature type="binding site" evidence="1">
    <location>
        <position position="68"/>
    </location>
    <ligand>
        <name>Zn(2+)</name>
        <dbReference type="ChEBI" id="CHEBI:29105"/>
        <label>2</label>
        <note>catalytic</note>
    </ligand>
</feature>
<feature type="binding site" evidence="1">
    <location>
        <position position="141"/>
    </location>
    <ligand>
        <name>Zn(2+)</name>
        <dbReference type="ChEBI" id="CHEBI:29105"/>
        <label>1</label>
        <note>catalytic</note>
    </ligand>
</feature>
<feature type="binding site" evidence="1">
    <location>
        <position position="212"/>
    </location>
    <ligand>
        <name>Zn(2+)</name>
        <dbReference type="ChEBI" id="CHEBI:29105"/>
        <label>1</label>
        <note>catalytic</note>
    </ligand>
</feature>
<feature type="binding site" evidence="1">
    <location>
        <position position="212"/>
    </location>
    <ligand>
        <name>Zn(2+)</name>
        <dbReference type="ChEBI" id="CHEBI:29105"/>
        <label>2</label>
        <note>catalytic</note>
    </ligand>
</feature>
<feature type="binding site" evidence="1">
    <location>
        <position position="270"/>
    </location>
    <ligand>
        <name>Zn(2+)</name>
        <dbReference type="ChEBI" id="CHEBI:29105"/>
        <label>2</label>
        <note>catalytic</note>
    </ligand>
</feature>
<reference key="1">
    <citation type="journal article" date="2006" name="J. Bacteriol.">
        <title>Pathogenomic sequence analysis of Bacillus cereus and Bacillus thuringiensis isolates closely related to Bacillus anthracis.</title>
        <authorList>
            <person name="Han C.S."/>
            <person name="Xie G."/>
            <person name="Challacombe J.F."/>
            <person name="Altherr M.R."/>
            <person name="Bhotika S.S."/>
            <person name="Bruce D."/>
            <person name="Campbell C.S."/>
            <person name="Campbell M.L."/>
            <person name="Chen J."/>
            <person name="Chertkov O."/>
            <person name="Cleland C."/>
            <person name="Dimitrijevic M."/>
            <person name="Doggett N.A."/>
            <person name="Fawcett J.J."/>
            <person name="Glavina T."/>
            <person name="Goodwin L.A."/>
            <person name="Hill K.K."/>
            <person name="Hitchcock P."/>
            <person name="Jackson P.J."/>
            <person name="Keim P."/>
            <person name="Kewalramani A.R."/>
            <person name="Longmire J."/>
            <person name="Lucas S."/>
            <person name="Malfatti S."/>
            <person name="McMurry K."/>
            <person name="Meincke L.J."/>
            <person name="Misra M."/>
            <person name="Moseman B.L."/>
            <person name="Mundt M."/>
            <person name="Munk A.C."/>
            <person name="Okinaka R.T."/>
            <person name="Parson-Quintana B."/>
            <person name="Reilly L.P."/>
            <person name="Richardson P."/>
            <person name="Robinson D.L."/>
            <person name="Rubin E."/>
            <person name="Saunders E."/>
            <person name="Tapia R."/>
            <person name="Tesmer J.G."/>
            <person name="Thayer N."/>
            <person name="Thompson L.S."/>
            <person name="Tice H."/>
            <person name="Ticknor L.O."/>
            <person name="Wills P.L."/>
            <person name="Brettin T.S."/>
            <person name="Gilna P."/>
        </authorList>
    </citation>
    <scope>NUCLEOTIDE SEQUENCE [LARGE SCALE GENOMIC DNA]</scope>
    <source>
        <strain>ZK / E33L</strain>
    </source>
</reference>
<keyword id="KW-0255">Endonuclease</keyword>
<keyword id="KW-0378">Hydrolase</keyword>
<keyword id="KW-0479">Metal-binding</keyword>
<keyword id="KW-0540">Nuclease</keyword>
<keyword id="KW-0819">tRNA processing</keyword>
<keyword id="KW-0862">Zinc</keyword>
<evidence type="ECO:0000255" key="1">
    <source>
        <dbReference type="HAMAP-Rule" id="MF_01818"/>
    </source>
</evidence>